<accession>Q1JNY0</accession>
<gene>
    <name evidence="1" type="primary">tyrS</name>
    <name type="ordered locus">MGAS9429_Spy0081</name>
</gene>
<evidence type="ECO:0000255" key="1">
    <source>
        <dbReference type="HAMAP-Rule" id="MF_02006"/>
    </source>
</evidence>
<organism>
    <name type="scientific">Streptococcus pyogenes serotype M12 (strain MGAS9429)</name>
    <dbReference type="NCBI Taxonomy" id="370551"/>
    <lineage>
        <taxon>Bacteria</taxon>
        <taxon>Bacillati</taxon>
        <taxon>Bacillota</taxon>
        <taxon>Bacilli</taxon>
        <taxon>Lactobacillales</taxon>
        <taxon>Streptococcaceae</taxon>
        <taxon>Streptococcus</taxon>
    </lineage>
</organism>
<keyword id="KW-0030">Aminoacyl-tRNA synthetase</keyword>
<keyword id="KW-0067">ATP-binding</keyword>
<keyword id="KW-0963">Cytoplasm</keyword>
<keyword id="KW-0436">Ligase</keyword>
<keyword id="KW-0547">Nucleotide-binding</keyword>
<keyword id="KW-0648">Protein biosynthesis</keyword>
<keyword id="KW-0694">RNA-binding</keyword>
<reference key="1">
    <citation type="journal article" date="2006" name="Proc. Natl. Acad. Sci. U.S.A.">
        <title>Molecular genetic anatomy of inter- and intraserotype variation in the human bacterial pathogen group A Streptococcus.</title>
        <authorList>
            <person name="Beres S.B."/>
            <person name="Richter E.W."/>
            <person name="Nagiec M.J."/>
            <person name="Sumby P."/>
            <person name="Porcella S.F."/>
            <person name="DeLeo F.R."/>
            <person name="Musser J.M."/>
        </authorList>
    </citation>
    <scope>NUCLEOTIDE SEQUENCE [LARGE SCALE GENOMIC DNA]</scope>
    <source>
        <strain>MGAS9429</strain>
    </source>
</reference>
<protein>
    <recommendedName>
        <fullName evidence="1">Tyrosine--tRNA ligase</fullName>
        <ecNumber evidence="1">6.1.1.1</ecNumber>
    </recommendedName>
    <alternativeName>
        <fullName evidence="1">Tyrosyl-tRNA synthetase</fullName>
        <shortName evidence="1">TyrRS</shortName>
    </alternativeName>
</protein>
<sequence>MNIFEELKARGLVFQTTDEQALVKALTEGQVSYYTGYDPTADSLHLGHLVAILTSRRLQLAGHKPYALVGGATGLIGDPSFKDAERSLQTKETVLEWSDKIKGQLSTFLDFENGDNKAELVNNYDWFSQISFIDFLRDVGKYFTVNYMMSKDSVKKRIETGISYTEFAYQIMQGYDFYELNDKHNVTLQIGGSDQWGNMTAGTELLRKKADKTGHVMTVPLITDSTGKKFGKSEGNAVWLDADKTSPYEMYQFWLNVMDDDAVRFLKIFTFLSLDEIAEIETQFNAARHERLAQKTLAREVVTLVHGEEAYKQALNITEQLFAGNIKNLSANELKQGLSNVPNYHVQSEDSLNLVDMLVTAGISPSKRQAREDVQNGAIYINGDRVQDLDYQLSNDDKIDDQLTVIRRGKKKYAVLTY</sequence>
<comment type="function">
    <text evidence="1">Catalyzes the attachment of tyrosine to tRNA(Tyr) in a two-step reaction: tyrosine is first activated by ATP to form Tyr-AMP and then transferred to the acceptor end of tRNA(Tyr).</text>
</comment>
<comment type="catalytic activity">
    <reaction evidence="1">
        <text>tRNA(Tyr) + L-tyrosine + ATP = L-tyrosyl-tRNA(Tyr) + AMP + diphosphate + H(+)</text>
        <dbReference type="Rhea" id="RHEA:10220"/>
        <dbReference type="Rhea" id="RHEA-COMP:9706"/>
        <dbReference type="Rhea" id="RHEA-COMP:9707"/>
        <dbReference type="ChEBI" id="CHEBI:15378"/>
        <dbReference type="ChEBI" id="CHEBI:30616"/>
        <dbReference type="ChEBI" id="CHEBI:33019"/>
        <dbReference type="ChEBI" id="CHEBI:58315"/>
        <dbReference type="ChEBI" id="CHEBI:78442"/>
        <dbReference type="ChEBI" id="CHEBI:78536"/>
        <dbReference type="ChEBI" id="CHEBI:456215"/>
        <dbReference type="EC" id="6.1.1.1"/>
    </reaction>
</comment>
<comment type="subunit">
    <text evidence="1">Homodimer.</text>
</comment>
<comment type="subcellular location">
    <subcellularLocation>
        <location evidence="1">Cytoplasm</location>
    </subcellularLocation>
</comment>
<comment type="similarity">
    <text evidence="1">Belongs to the class-I aminoacyl-tRNA synthetase family. TyrS type 1 subfamily.</text>
</comment>
<name>SYY_STRPC</name>
<dbReference type="EC" id="6.1.1.1" evidence="1"/>
<dbReference type="EMBL" id="CP000259">
    <property type="protein sequence ID" value="ABF31269.1"/>
    <property type="molecule type" value="Genomic_DNA"/>
</dbReference>
<dbReference type="RefSeq" id="WP_002987768.1">
    <property type="nucleotide sequence ID" value="NC_008021.1"/>
</dbReference>
<dbReference type="SMR" id="Q1JNY0"/>
<dbReference type="GeneID" id="69900074"/>
<dbReference type="KEGG" id="spk:MGAS9429_Spy0081"/>
<dbReference type="HOGENOM" id="CLU_024003_0_3_9"/>
<dbReference type="Proteomes" id="UP000002433">
    <property type="component" value="Chromosome"/>
</dbReference>
<dbReference type="GO" id="GO:0005829">
    <property type="term" value="C:cytosol"/>
    <property type="evidence" value="ECO:0007669"/>
    <property type="project" value="TreeGrafter"/>
</dbReference>
<dbReference type="GO" id="GO:0005524">
    <property type="term" value="F:ATP binding"/>
    <property type="evidence" value="ECO:0007669"/>
    <property type="project" value="UniProtKB-UniRule"/>
</dbReference>
<dbReference type="GO" id="GO:0003723">
    <property type="term" value="F:RNA binding"/>
    <property type="evidence" value="ECO:0007669"/>
    <property type="project" value="UniProtKB-KW"/>
</dbReference>
<dbReference type="GO" id="GO:0004831">
    <property type="term" value="F:tyrosine-tRNA ligase activity"/>
    <property type="evidence" value="ECO:0007669"/>
    <property type="project" value="UniProtKB-UniRule"/>
</dbReference>
<dbReference type="GO" id="GO:0006437">
    <property type="term" value="P:tyrosyl-tRNA aminoacylation"/>
    <property type="evidence" value="ECO:0007669"/>
    <property type="project" value="UniProtKB-UniRule"/>
</dbReference>
<dbReference type="CDD" id="cd00165">
    <property type="entry name" value="S4"/>
    <property type="match status" value="1"/>
</dbReference>
<dbReference type="CDD" id="cd00805">
    <property type="entry name" value="TyrRS_core"/>
    <property type="match status" value="1"/>
</dbReference>
<dbReference type="FunFam" id="1.10.240.10:FF:000001">
    <property type="entry name" value="Tyrosine--tRNA ligase"/>
    <property type="match status" value="1"/>
</dbReference>
<dbReference type="FunFam" id="3.40.50.620:FF:000008">
    <property type="entry name" value="Tyrosine--tRNA ligase"/>
    <property type="match status" value="1"/>
</dbReference>
<dbReference type="Gene3D" id="3.40.50.620">
    <property type="entry name" value="HUPs"/>
    <property type="match status" value="1"/>
</dbReference>
<dbReference type="Gene3D" id="3.10.290.10">
    <property type="entry name" value="RNA-binding S4 domain"/>
    <property type="match status" value="1"/>
</dbReference>
<dbReference type="Gene3D" id="1.10.240.10">
    <property type="entry name" value="Tyrosyl-Transfer RNA Synthetase"/>
    <property type="match status" value="1"/>
</dbReference>
<dbReference type="HAMAP" id="MF_02006">
    <property type="entry name" value="Tyr_tRNA_synth_type1"/>
    <property type="match status" value="1"/>
</dbReference>
<dbReference type="InterPro" id="IPR001412">
    <property type="entry name" value="aa-tRNA-synth_I_CS"/>
</dbReference>
<dbReference type="InterPro" id="IPR002305">
    <property type="entry name" value="aa-tRNA-synth_Ic"/>
</dbReference>
<dbReference type="InterPro" id="IPR014729">
    <property type="entry name" value="Rossmann-like_a/b/a_fold"/>
</dbReference>
<dbReference type="InterPro" id="IPR002942">
    <property type="entry name" value="S4_RNA-bd"/>
</dbReference>
<dbReference type="InterPro" id="IPR036986">
    <property type="entry name" value="S4_RNA-bd_sf"/>
</dbReference>
<dbReference type="InterPro" id="IPR054608">
    <property type="entry name" value="SYY-like_C"/>
</dbReference>
<dbReference type="InterPro" id="IPR002307">
    <property type="entry name" value="Tyr-tRNA-ligase"/>
</dbReference>
<dbReference type="InterPro" id="IPR024088">
    <property type="entry name" value="Tyr-tRNA-ligase_bac-type"/>
</dbReference>
<dbReference type="InterPro" id="IPR024107">
    <property type="entry name" value="Tyr-tRNA-ligase_bac_1"/>
</dbReference>
<dbReference type="NCBIfam" id="TIGR00234">
    <property type="entry name" value="tyrS"/>
    <property type="match status" value="1"/>
</dbReference>
<dbReference type="PANTHER" id="PTHR11766:SF0">
    <property type="entry name" value="TYROSINE--TRNA LIGASE, MITOCHONDRIAL"/>
    <property type="match status" value="1"/>
</dbReference>
<dbReference type="PANTHER" id="PTHR11766">
    <property type="entry name" value="TYROSYL-TRNA SYNTHETASE"/>
    <property type="match status" value="1"/>
</dbReference>
<dbReference type="Pfam" id="PF22421">
    <property type="entry name" value="SYY_C-terminal"/>
    <property type="match status" value="1"/>
</dbReference>
<dbReference type="Pfam" id="PF00579">
    <property type="entry name" value="tRNA-synt_1b"/>
    <property type="match status" value="1"/>
</dbReference>
<dbReference type="PRINTS" id="PR01040">
    <property type="entry name" value="TRNASYNTHTYR"/>
</dbReference>
<dbReference type="SMART" id="SM00363">
    <property type="entry name" value="S4"/>
    <property type="match status" value="1"/>
</dbReference>
<dbReference type="SUPFAM" id="SSF55174">
    <property type="entry name" value="Alpha-L RNA-binding motif"/>
    <property type="match status" value="1"/>
</dbReference>
<dbReference type="SUPFAM" id="SSF52374">
    <property type="entry name" value="Nucleotidylyl transferase"/>
    <property type="match status" value="1"/>
</dbReference>
<dbReference type="PROSITE" id="PS00178">
    <property type="entry name" value="AA_TRNA_LIGASE_I"/>
    <property type="match status" value="1"/>
</dbReference>
<dbReference type="PROSITE" id="PS50889">
    <property type="entry name" value="S4"/>
    <property type="match status" value="1"/>
</dbReference>
<feature type="chain" id="PRO_1000088635" description="Tyrosine--tRNA ligase">
    <location>
        <begin position="1"/>
        <end position="418"/>
    </location>
</feature>
<feature type="domain" description="S4 RNA-binding" evidence="1">
    <location>
        <begin position="352"/>
        <end position="418"/>
    </location>
</feature>
<feature type="short sequence motif" description="'HIGH' region">
    <location>
        <begin position="39"/>
        <end position="48"/>
    </location>
</feature>
<feature type="short sequence motif" description="'KMSKS' region">
    <location>
        <begin position="229"/>
        <end position="233"/>
    </location>
</feature>
<feature type="binding site" evidence="1">
    <location>
        <position position="34"/>
    </location>
    <ligand>
        <name>L-tyrosine</name>
        <dbReference type="ChEBI" id="CHEBI:58315"/>
    </ligand>
</feature>
<feature type="binding site" evidence="1">
    <location>
        <position position="169"/>
    </location>
    <ligand>
        <name>L-tyrosine</name>
        <dbReference type="ChEBI" id="CHEBI:58315"/>
    </ligand>
</feature>
<feature type="binding site" evidence="1">
    <location>
        <position position="173"/>
    </location>
    <ligand>
        <name>L-tyrosine</name>
        <dbReference type="ChEBI" id="CHEBI:58315"/>
    </ligand>
</feature>
<feature type="binding site" evidence="1">
    <location>
        <position position="232"/>
    </location>
    <ligand>
        <name>ATP</name>
        <dbReference type="ChEBI" id="CHEBI:30616"/>
    </ligand>
</feature>
<proteinExistence type="inferred from homology"/>